<reference key="1">
    <citation type="journal article" date="1986" name="Nucleic Acids Res.">
        <title>Cloning, expression and sequencing the molybdenum-pterin binding protein (mop) gene of Clostridium pasteurianum in Escherichia coli.</title>
        <authorList>
            <person name="Hinton S.M."/>
            <person name="Freyer G."/>
        </authorList>
    </citation>
    <scope>NUCLEOTIDE SEQUENCE [GENOMIC DNA]</scope>
    <source>
        <strain>ATCC 6013 / DSM 525 / NCIB 9486 / VKM B-1774 / W5</strain>
    </source>
</reference>
<reference key="2">
    <citation type="journal article" date="1987" name="Gene">
        <title>The molybdenum-pterin binding protein is encoded by a multigene family in Clostridium pasteurianum.</title>
        <authorList>
            <person name="Hinton S.M."/>
            <person name="Slaughter C."/>
            <person name="Eisner W."/>
            <person name="Fisher T."/>
        </authorList>
    </citation>
    <scope>NUCLEOTIDE SEQUENCE [GENOMIC DNA]</scope>
</reference>
<feature type="chain" id="PRO_0000096532" description="Molybdenum-pterin-binding protein 1">
    <location>
        <begin position="1"/>
        <end position="68"/>
    </location>
</feature>
<feature type="domain" description="Mop" evidence="1">
    <location>
        <begin position="2"/>
        <end position="68"/>
    </location>
</feature>
<feature type="sequence conflict" description="In Ref. 1; CAA28652." evidence="2" ref="1">
    <original>V</original>
    <variation>G</variation>
    <location>
        <position position="58"/>
    </location>
</feature>
<comment type="function">
    <text>Binds one mole of molybdenum per mole of protein and contains a pterin.</text>
</comment>
<proteinExistence type="predicted"/>
<sequence>MSISARNQLKGKVVGLKKGVITAEVVLEIAGGNKITSIISLDSVEELGVKEGAELTAVIKSTDVMILA</sequence>
<accession>P04952</accession>
<protein>
    <recommendedName>
        <fullName>Molybdenum-pterin-binding protein 1</fullName>
    </recommendedName>
    <alternativeName>
        <fullName>Molybdenum-pterin-binding protein I</fullName>
    </alternativeName>
</protein>
<evidence type="ECO:0000255" key="1">
    <source>
        <dbReference type="PROSITE-ProRule" id="PRU01213"/>
    </source>
</evidence>
<evidence type="ECO:0000305" key="2"/>
<keyword id="KW-0500">Molybdenum</keyword>
<gene>
    <name type="primary">mopI</name>
</gene>
<organism>
    <name type="scientific">Clostridium pasteurianum</name>
    <dbReference type="NCBI Taxonomy" id="1501"/>
    <lineage>
        <taxon>Bacteria</taxon>
        <taxon>Bacillati</taxon>
        <taxon>Bacillota</taxon>
        <taxon>Clostridia</taxon>
        <taxon>Eubacteriales</taxon>
        <taxon>Clostridiaceae</taxon>
        <taxon>Clostridium</taxon>
    </lineage>
</organism>
<name>MOP1_CLOPA</name>
<dbReference type="EMBL" id="AH000875">
    <property type="protein sequence ID" value="AAA23252.1"/>
    <property type="molecule type" value="Genomic_DNA"/>
</dbReference>
<dbReference type="EMBL" id="X04982">
    <property type="protein sequence ID" value="CAA28652.1"/>
    <property type="molecule type" value="Genomic_DNA"/>
</dbReference>
<dbReference type="PIR" id="A25574">
    <property type="entry name" value="A25574"/>
</dbReference>
<dbReference type="RefSeq" id="WP_003447802.1">
    <property type="nucleotide sequence ID" value="NZ_LFYL01000002.1"/>
</dbReference>
<dbReference type="SMR" id="P04952"/>
<dbReference type="OrthoDB" id="122515at2"/>
<dbReference type="GO" id="GO:0015689">
    <property type="term" value="P:molybdate ion transport"/>
    <property type="evidence" value="ECO:0007669"/>
    <property type="project" value="InterPro"/>
</dbReference>
<dbReference type="Gene3D" id="2.40.50.100">
    <property type="match status" value="1"/>
</dbReference>
<dbReference type="InterPro" id="IPR008995">
    <property type="entry name" value="Mo/tungstate-bd_C_term_dom"/>
</dbReference>
<dbReference type="InterPro" id="IPR004606">
    <property type="entry name" value="Mop_domain"/>
</dbReference>
<dbReference type="InterPro" id="IPR005116">
    <property type="entry name" value="Transp-assoc_OB_typ1"/>
</dbReference>
<dbReference type="NCBIfam" id="TIGR00638">
    <property type="entry name" value="Mop"/>
    <property type="match status" value="1"/>
</dbReference>
<dbReference type="Pfam" id="PF03459">
    <property type="entry name" value="TOBE"/>
    <property type="match status" value="1"/>
</dbReference>
<dbReference type="SUPFAM" id="SSF50331">
    <property type="entry name" value="MOP-like"/>
    <property type="match status" value="1"/>
</dbReference>
<dbReference type="PROSITE" id="PS51866">
    <property type="entry name" value="MOP"/>
    <property type="match status" value="1"/>
</dbReference>